<comment type="function">
    <text evidence="1 2">Glycerophosphodiester phosphodiesterase that promotes neurite formation and drives spinal motor neuron differentiation (By similarity). Mediates the cleavage of glycosylphosphatidylinositol (GPI) anchor of target proteins: removes the GPI-anchor of RECK, leading to release RECK from the plasma membrane (By similarity). May contribute to the osmotic regulation of cellular glycerophosphocholine (By similarity).</text>
</comment>
<comment type="catalytic activity">
    <reaction evidence="1">
        <text>a 1,2-diacyl-sn-glycero-3-phospho-(1D-myo-inositol-4,5-bisphosphate) + H2O = 1D-myo-inositol 1,4,5-trisphosphate + a 1,2-diacyl-sn-glycerol + H(+)</text>
        <dbReference type="Rhea" id="RHEA:33179"/>
        <dbReference type="ChEBI" id="CHEBI:15377"/>
        <dbReference type="ChEBI" id="CHEBI:15378"/>
        <dbReference type="ChEBI" id="CHEBI:17815"/>
        <dbReference type="ChEBI" id="CHEBI:58456"/>
        <dbReference type="ChEBI" id="CHEBI:203600"/>
        <dbReference type="EC" id="3.1.4.11"/>
    </reaction>
</comment>
<comment type="catalytic activity">
    <reaction evidence="2">
        <text>sn-glycerol 3-phosphocholine + H2O = sn-glycerol 3-phosphate + choline + H(+)</text>
        <dbReference type="Rhea" id="RHEA:16061"/>
        <dbReference type="ChEBI" id="CHEBI:15354"/>
        <dbReference type="ChEBI" id="CHEBI:15377"/>
        <dbReference type="ChEBI" id="CHEBI:15378"/>
        <dbReference type="ChEBI" id="CHEBI:16870"/>
        <dbReference type="ChEBI" id="CHEBI:57597"/>
        <dbReference type="EC" id="3.1.4.2"/>
    </reaction>
    <physiologicalReaction direction="left-to-right" evidence="2">
        <dbReference type="Rhea" id="RHEA:16062"/>
    </physiologicalReaction>
</comment>
<comment type="subunit">
    <text evidence="1">Interacts with PRDX1; forms a mixed-disulfide with PRDX1, leading to disrupt intramolecular disulfide bond between Cys-25 and Cys-571.</text>
</comment>
<comment type="interaction">
    <interactant intactId="EBI-2833203">
        <id>Q8WTR4</id>
    </interactant>
    <interactant intactId="EBI-597835">
        <id>P50542</id>
        <label>PEX5</label>
    </interactant>
    <organismsDiffer>false</organismsDiffer>
    <experiments>3</experiments>
</comment>
<comment type="interaction">
    <interactant intactId="EBI-2833203">
        <id>Q8WTR4</id>
    </interactant>
    <interactant intactId="EBI-747107">
        <id>Q8IUQ4</id>
        <label>SIAH1</label>
    </interactant>
    <organismsDiffer>false</organismsDiffer>
    <experiments>3</experiments>
</comment>
<comment type="interaction">
    <interactant intactId="EBI-16430931">
        <id>Q8WTR4-3</id>
    </interactant>
    <interactant intactId="EBI-1171113">
        <id>Q14677</id>
        <label>CLINT1</label>
    </interactant>
    <organismsDiffer>false</organismsDiffer>
    <experiments>3</experiments>
</comment>
<comment type="subcellular location">
    <subcellularLocation>
        <location evidence="2">Endomembrane system</location>
        <topology evidence="3">Multi-pass membrane protein</topology>
    </subcellularLocation>
    <subcellularLocation>
        <location evidence="2">Cytoplasm</location>
        <location evidence="2">Perinuclear region</location>
    </subcellularLocation>
    <subcellularLocation>
        <location evidence="2">Cell projection</location>
        <location evidence="2">Growth cone</location>
    </subcellularLocation>
    <text evidence="2">In a punctate perinuclear pattern.</text>
</comment>
<comment type="alternative products">
    <event type="alternative splicing"/>
    <isoform>
        <id>Q8WTR4-1</id>
        <name>1</name>
        <sequence type="displayed"/>
    </isoform>
    <isoform>
        <id>Q8WTR4-2</id>
        <name>2</name>
        <sequence type="described" ref="VSP_020816"/>
    </isoform>
    <isoform>
        <id>Q8WTR4-3</id>
        <name>3</name>
        <sequence type="described" ref="VSP_020815"/>
    </isoform>
    <isoform>
        <id>Q8WTR4-4</id>
        <name>4</name>
        <sequence type="described" ref="VSP_020814"/>
    </isoform>
    <isoform>
        <id>Q8WTR4-5</id>
        <name>5</name>
        <sequence type="described" ref="VSP_020813"/>
    </isoform>
</comment>
<comment type="PTM">
    <text evidence="1">Intramolecular disulfide bond between Cys-25 and Cys-571 is reduced by PRDX1.</text>
</comment>
<comment type="similarity">
    <text evidence="12">Belongs to the glycerophosphoryl diester phosphodiesterase family.</text>
</comment>
<comment type="sequence caution" evidence="12">
    <conflict type="erroneous initiation">
        <sequence resource="EMBL-CDS" id="AAP97686"/>
    </conflict>
</comment>
<comment type="sequence caution" evidence="12">
    <conflict type="erroneous initiation">
        <sequence resource="EMBL-CDS" id="BAC11242"/>
    </conflict>
</comment>
<dbReference type="EC" id="3.1.4.2" evidence="2"/>
<dbReference type="EC" id="3.1.4.11" evidence="1"/>
<dbReference type="EMBL" id="AF318351">
    <property type="protein sequence ID" value="AAL55858.1"/>
    <property type="molecule type" value="mRNA"/>
</dbReference>
<dbReference type="EMBL" id="AF318377">
    <property type="protein sequence ID" value="AAL55884.1"/>
    <property type="molecule type" value="mRNA"/>
</dbReference>
<dbReference type="EMBL" id="AY358477">
    <property type="protein sequence ID" value="AAQ88841.1"/>
    <property type="molecule type" value="mRNA"/>
</dbReference>
<dbReference type="EMBL" id="AK098808">
    <property type="protein sequence ID" value="BAC05418.1"/>
    <property type="molecule type" value="mRNA"/>
</dbReference>
<dbReference type="EMBL" id="BC018771">
    <property type="protein sequence ID" value="AAH18771.1"/>
    <property type="molecule type" value="mRNA"/>
</dbReference>
<dbReference type="EMBL" id="BC033391">
    <property type="protein sequence ID" value="AAH33391.1"/>
    <property type="molecule type" value="mRNA"/>
</dbReference>
<dbReference type="EMBL" id="AK074848">
    <property type="protein sequence ID" value="BAC11242.1"/>
    <property type="status" value="ALT_INIT"/>
    <property type="molecule type" value="mRNA"/>
</dbReference>
<dbReference type="EMBL" id="AF451987">
    <property type="protein sequence ID" value="AAP97686.1"/>
    <property type="status" value="ALT_INIT"/>
    <property type="molecule type" value="mRNA"/>
</dbReference>
<dbReference type="CCDS" id="CCDS8238.1">
    <molecule id="Q8WTR4-1"/>
</dbReference>
<dbReference type="CCDS" id="CCDS86229.1">
    <molecule id="Q8WTR4-5"/>
</dbReference>
<dbReference type="CCDS" id="CCDS86230.1">
    <molecule id="Q8WTR4-3"/>
</dbReference>
<dbReference type="RefSeq" id="NP_001338096.1">
    <molecule id="Q8WTR4-3"/>
    <property type="nucleotide sequence ID" value="NM_001351167.2"/>
</dbReference>
<dbReference type="RefSeq" id="NP_001338097.1">
    <molecule id="Q8WTR4-5"/>
    <property type="nucleotide sequence ID" value="NM_001351168.1"/>
</dbReference>
<dbReference type="RefSeq" id="NP_110419.5">
    <molecule id="Q8WTR4-1"/>
    <property type="nucleotide sequence ID" value="NM_030792.6"/>
</dbReference>
<dbReference type="RefSeq" id="XP_006718760.1">
    <molecule id="Q8WTR4-1"/>
    <property type="nucleotide sequence ID" value="XM_006718697.4"/>
</dbReference>
<dbReference type="RefSeq" id="XP_011543587.1">
    <property type="nucleotide sequence ID" value="XM_011545285.2"/>
</dbReference>
<dbReference type="RefSeq" id="XP_011543589.1">
    <property type="nucleotide sequence ID" value="XM_011545287.1"/>
</dbReference>
<dbReference type="RefSeq" id="XP_047283604.1">
    <molecule id="Q8WTR4-1"/>
    <property type="nucleotide sequence ID" value="XM_047427648.1"/>
</dbReference>
<dbReference type="RefSeq" id="XP_047283605.1">
    <molecule id="Q8WTR4-1"/>
    <property type="nucleotide sequence ID" value="XM_047427649.1"/>
</dbReference>
<dbReference type="RefSeq" id="XP_047283606.1">
    <molecule id="Q8WTR4-1"/>
    <property type="nucleotide sequence ID" value="XM_047427650.1"/>
</dbReference>
<dbReference type="RefSeq" id="XP_047283607.1">
    <molecule id="Q8WTR4-1"/>
    <property type="nucleotide sequence ID" value="XM_047427651.1"/>
</dbReference>
<dbReference type="RefSeq" id="XP_047283608.1">
    <molecule id="Q8WTR4-1"/>
    <property type="nucleotide sequence ID" value="XM_047427652.1"/>
</dbReference>
<dbReference type="RefSeq" id="XP_047283609.1">
    <molecule id="Q8WTR4-1"/>
    <property type="nucleotide sequence ID" value="XM_047427653.1"/>
</dbReference>
<dbReference type="RefSeq" id="XP_047283610.1">
    <molecule id="Q8WTR4-1"/>
    <property type="nucleotide sequence ID" value="XM_047427654.1"/>
</dbReference>
<dbReference type="RefSeq" id="XP_054226040.1">
    <molecule id="Q8WTR4-1"/>
    <property type="nucleotide sequence ID" value="XM_054370065.1"/>
</dbReference>
<dbReference type="RefSeq" id="XP_054226041.1">
    <molecule id="Q8WTR4-1"/>
    <property type="nucleotide sequence ID" value="XM_054370066.1"/>
</dbReference>
<dbReference type="RefSeq" id="XP_054226042.1">
    <molecule id="Q8WTR4-1"/>
    <property type="nucleotide sequence ID" value="XM_054370067.1"/>
</dbReference>
<dbReference type="RefSeq" id="XP_054226043.1">
    <molecule id="Q8WTR4-1"/>
    <property type="nucleotide sequence ID" value="XM_054370068.1"/>
</dbReference>
<dbReference type="RefSeq" id="XP_054226044.1">
    <molecule id="Q8WTR4-1"/>
    <property type="nucleotide sequence ID" value="XM_054370069.1"/>
</dbReference>
<dbReference type="RefSeq" id="XP_054226045.1">
    <molecule id="Q8WTR4-1"/>
    <property type="nucleotide sequence ID" value="XM_054370070.1"/>
</dbReference>
<dbReference type="RefSeq" id="XP_054226046.1">
    <molecule id="Q8WTR4-1"/>
    <property type="nucleotide sequence ID" value="XM_054370071.1"/>
</dbReference>
<dbReference type="RefSeq" id="XP_054226047.1">
    <molecule id="Q8WTR4-1"/>
    <property type="nucleotide sequence ID" value="XM_054370072.1"/>
</dbReference>
<dbReference type="SMR" id="Q8WTR4"/>
<dbReference type="BioGRID" id="123512">
    <property type="interactions" value="76"/>
</dbReference>
<dbReference type="FunCoup" id="Q8WTR4">
    <property type="interactions" value="559"/>
</dbReference>
<dbReference type="IntAct" id="Q8WTR4">
    <property type="interactions" value="53"/>
</dbReference>
<dbReference type="STRING" id="9606.ENSP00000337972"/>
<dbReference type="GlyCosmos" id="Q8WTR4">
    <property type="glycosylation" value="5 sites, No reported glycans"/>
</dbReference>
<dbReference type="GlyGen" id="Q8WTR4">
    <property type="glycosylation" value="5 sites, 2 N-linked glycans (2 sites)"/>
</dbReference>
<dbReference type="iPTMnet" id="Q8WTR4"/>
<dbReference type="PhosphoSitePlus" id="Q8WTR4"/>
<dbReference type="BioMuta" id="GDPD5"/>
<dbReference type="DMDM" id="115502213"/>
<dbReference type="MassIVE" id="Q8WTR4"/>
<dbReference type="PaxDb" id="9606-ENSP00000337972"/>
<dbReference type="PeptideAtlas" id="Q8WTR4"/>
<dbReference type="ProteomicsDB" id="74586">
    <molecule id="Q8WTR4-1"/>
</dbReference>
<dbReference type="ProteomicsDB" id="74587">
    <molecule id="Q8WTR4-2"/>
</dbReference>
<dbReference type="ProteomicsDB" id="74588">
    <molecule id="Q8WTR4-3"/>
</dbReference>
<dbReference type="ProteomicsDB" id="74589">
    <molecule id="Q8WTR4-4"/>
</dbReference>
<dbReference type="ProteomicsDB" id="74590">
    <molecule id="Q8WTR4-5"/>
</dbReference>
<dbReference type="Antibodypedia" id="45087">
    <property type="antibodies" value="146 antibodies from 27 providers"/>
</dbReference>
<dbReference type="DNASU" id="81544"/>
<dbReference type="Ensembl" id="ENST00000336898.8">
    <molecule id="Q8WTR4-1"/>
    <property type="protein sequence ID" value="ENSP00000337972.3"/>
    <property type="gene ID" value="ENSG00000158555.15"/>
</dbReference>
<dbReference type="Ensembl" id="ENST00000526177.5">
    <molecule id="Q8WTR4-3"/>
    <property type="protein sequence ID" value="ENSP00000434050.1"/>
    <property type="gene ID" value="ENSG00000158555.15"/>
</dbReference>
<dbReference type="Ensembl" id="ENST00000529721.5">
    <molecule id="Q8WTR4-1"/>
    <property type="protein sequence ID" value="ENSP00000433214.1"/>
    <property type="gene ID" value="ENSG00000158555.15"/>
</dbReference>
<dbReference type="Ensembl" id="ENST00000533784.5">
    <molecule id="Q8WTR4-2"/>
    <property type="protein sequence ID" value="ENSP00000437049.1"/>
    <property type="gene ID" value="ENSG00000158555.15"/>
</dbReference>
<dbReference type="Ensembl" id="ENST00000533805.5">
    <molecule id="Q8WTR4-5"/>
    <property type="protein sequence ID" value="ENSP00000435196.1"/>
    <property type="gene ID" value="ENSG00000158555.15"/>
</dbReference>
<dbReference type="GeneID" id="81544"/>
<dbReference type="KEGG" id="hsa:81544"/>
<dbReference type="MANE-Select" id="ENST00000336898.8">
    <property type="protein sequence ID" value="ENSP00000337972.3"/>
    <property type="RefSeq nucleotide sequence ID" value="NM_030792.8"/>
    <property type="RefSeq protein sequence ID" value="NP_110419.5"/>
</dbReference>
<dbReference type="UCSC" id="uc001own.5">
    <molecule id="Q8WTR4-1"/>
    <property type="organism name" value="human"/>
</dbReference>
<dbReference type="AGR" id="HGNC:28804"/>
<dbReference type="CTD" id="81544"/>
<dbReference type="DisGeNET" id="81544"/>
<dbReference type="GeneCards" id="GDPD5"/>
<dbReference type="HGNC" id="HGNC:28804">
    <property type="gene designation" value="GDPD5"/>
</dbReference>
<dbReference type="HPA" id="ENSG00000158555">
    <property type="expression patterns" value="Tissue enhanced (lymphoid tissue, retina)"/>
</dbReference>
<dbReference type="MIM" id="609632">
    <property type="type" value="gene"/>
</dbReference>
<dbReference type="neXtProt" id="NX_Q8WTR4"/>
<dbReference type="OpenTargets" id="ENSG00000158555"/>
<dbReference type="PharmGKB" id="PA142671743"/>
<dbReference type="VEuPathDB" id="HostDB:ENSG00000158555"/>
<dbReference type="eggNOG" id="KOG2258">
    <property type="taxonomic scope" value="Eukaryota"/>
</dbReference>
<dbReference type="GeneTree" id="ENSGT00940000159690"/>
<dbReference type="HOGENOM" id="CLU_024259_1_0_1"/>
<dbReference type="InParanoid" id="Q8WTR4"/>
<dbReference type="OMA" id="HASMFNW"/>
<dbReference type="OrthoDB" id="1058301at2759"/>
<dbReference type="PAN-GO" id="Q8WTR4">
    <property type="GO annotations" value="3 GO annotations based on evolutionary models"/>
</dbReference>
<dbReference type="PhylomeDB" id="Q8WTR4"/>
<dbReference type="TreeFam" id="TF313692"/>
<dbReference type="BRENDA" id="3.1.4.11">
    <property type="organism ID" value="2681"/>
</dbReference>
<dbReference type="BRENDA" id="3.1.4.2">
    <property type="organism ID" value="2681"/>
</dbReference>
<dbReference type="BRENDA" id="3.1.4.46">
    <property type="organism ID" value="2681"/>
</dbReference>
<dbReference type="PathwayCommons" id="Q8WTR4"/>
<dbReference type="Reactome" id="R-HSA-6814848">
    <property type="pathway name" value="Glycerophospholipid catabolism"/>
</dbReference>
<dbReference type="SignaLink" id="Q8WTR4"/>
<dbReference type="BioGRID-ORCS" id="81544">
    <property type="hits" value="13 hits in 1162 CRISPR screens"/>
</dbReference>
<dbReference type="ChiTaRS" id="GDPD5">
    <property type="organism name" value="human"/>
</dbReference>
<dbReference type="GenomeRNAi" id="81544"/>
<dbReference type="Pharos" id="Q8WTR4">
    <property type="development level" value="Tbio"/>
</dbReference>
<dbReference type="PRO" id="PR:Q8WTR4"/>
<dbReference type="Proteomes" id="UP000005640">
    <property type="component" value="Chromosome 11"/>
</dbReference>
<dbReference type="RNAct" id="Q8WTR4">
    <property type="molecule type" value="protein"/>
</dbReference>
<dbReference type="Bgee" id="ENSG00000158555">
    <property type="expression patterns" value="Expressed in spleen and 187 other cell types or tissues"/>
</dbReference>
<dbReference type="ExpressionAtlas" id="Q8WTR4">
    <property type="expression patterns" value="baseline and differential"/>
</dbReference>
<dbReference type="GO" id="GO:0012505">
    <property type="term" value="C:endomembrane system"/>
    <property type="evidence" value="ECO:0007669"/>
    <property type="project" value="UniProtKB-SubCell"/>
</dbReference>
<dbReference type="GO" id="GO:0030426">
    <property type="term" value="C:growth cone"/>
    <property type="evidence" value="ECO:0007669"/>
    <property type="project" value="UniProtKB-SubCell"/>
</dbReference>
<dbReference type="GO" id="GO:0048471">
    <property type="term" value="C:perinuclear region of cytoplasm"/>
    <property type="evidence" value="ECO:0007669"/>
    <property type="project" value="UniProtKB-SubCell"/>
</dbReference>
<dbReference type="GO" id="GO:0005886">
    <property type="term" value="C:plasma membrane"/>
    <property type="evidence" value="ECO:0000318"/>
    <property type="project" value="GO_Central"/>
</dbReference>
<dbReference type="GO" id="GO:0047389">
    <property type="term" value="F:glycerophosphocholine phosphodiesterase activity"/>
    <property type="evidence" value="ECO:0007669"/>
    <property type="project" value="UniProtKB-EC"/>
</dbReference>
<dbReference type="GO" id="GO:0008889">
    <property type="term" value="F:glycerophosphodiester phosphodiesterase activity"/>
    <property type="evidence" value="ECO:0000318"/>
    <property type="project" value="GO_Central"/>
</dbReference>
<dbReference type="GO" id="GO:0004435">
    <property type="term" value="F:phosphatidylinositol-4,5-bisphosphate phospholipase C activity"/>
    <property type="evidence" value="ECO:0007669"/>
    <property type="project" value="UniProtKB-EC"/>
</dbReference>
<dbReference type="GO" id="GO:0006629">
    <property type="term" value="P:lipid metabolic process"/>
    <property type="evidence" value="ECO:0007669"/>
    <property type="project" value="UniProtKB-KW"/>
</dbReference>
<dbReference type="GO" id="GO:0007399">
    <property type="term" value="P:nervous system development"/>
    <property type="evidence" value="ECO:0007669"/>
    <property type="project" value="UniProtKB-KW"/>
</dbReference>
<dbReference type="GO" id="GO:0045666">
    <property type="term" value="P:positive regulation of neuron differentiation"/>
    <property type="evidence" value="ECO:0000318"/>
    <property type="project" value="GO_Central"/>
</dbReference>
<dbReference type="CDD" id="cd08608">
    <property type="entry name" value="GDPD_GDE2"/>
    <property type="match status" value="1"/>
</dbReference>
<dbReference type="FunFam" id="3.20.20.190:FF:000028">
    <property type="entry name" value="Glycerophosphodiester phosphodiesterase domain-containing protein 5"/>
    <property type="match status" value="1"/>
</dbReference>
<dbReference type="Gene3D" id="3.20.20.190">
    <property type="entry name" value="Phosphatidylinositol (PI) phosphodiesterase"/>
    <property type="match status" value="1"/>
</dbReference>
<dbReference type="InterPro" id="IPR030395">
    <property type="entry name" value="GP_PDE_dom"/>
</dbReference>
<dbReference type="InterPro" id="IPR017946">
    <property type="entry name" value="PLC-like_Pdiesterase_TIM-brl"/>
</dbReference>
<dbReference type="PANTHER" id="PTHR23344:SF6">
    <property type="entry name" value="GLYCEROPHOSPHODIESTER PHOSPHODIESTERASE DOMAIN-CONTAINING PROTEIN 5"/>
    <property type="match status" value="1"/>
</dbReference>
<dbReference type="PANTHER" id="PTHR23344">
    <property type="entry name" value="GLYCEROPHOSPHORYL DIESTER PHOSPHODIESTERASE"/>
    <property type="match status" value="1"/>
</dbReference>
<dbReference type="Pfam" id="PF03009">
    <property type="entry name" value="GDPD"/>
    <property type="match status" value="1"/>
</dbReference>
<dbReference type="Pfam" id="PF13653">
    <property type="entry name" value="GDPD_2"/>
    <property type="match status" value="1"/>
</dbReference>
<dbReference type="SUPFAM" id="SSF51695">
    <property type="entry name" value="PLC-like phosphodiesterases"/>
    <property type="match status" value="1"/>
</dbReference>
<dbReference type="PROSITE" id="PS51704">
    <property type="entry name" value="GP_PDE"/>
    <property type="match status" value="1"/>
</dbReference>
<feature type="chain" id="PRO_0000251941" description="Glycerophosphodiester phosphodiesterase domain-containing protein 5">
    <location>
        <begin position="1"/>
        <end position="605"/>
    </location>
</feature>
<feature type="topological domain" description="Cytoplasmic" evidence="3">
    <location>
        <begin position="1"/>
        <end position="42"/>
    </location>
</feature>
<feature type="transmembrane region" description="Helical" evidence="3">
    <location>
        <begin position="43"/>
        <end position="63"/>
    </location>
</feature>
<feature type="topological domain" description="Extracellular" evidence="3">
    <location>
        <begin position="64"/>
        <end position="89"/>
    </location>
</feature>
<feature type="transmembrane region" description="Helical" evidence="3">
    <location>
        <begin position="90"/>
        <end position="110"/>
    </location>
</feature>
<feature type="topological domain" description="Cytoplasmic" evidence="3">
    <location>
        <begin position="111"/>
        <end position="125"/>
    </location>
</feature>
<feature type="transmembrane region" description="Helical" evidence="3">
    <location>
        <begin position="126"/>
        <end position="146"/>
    </location>
</feature>
<feature type="topological domain" description="Extracellular" evidence="3">
    <location>
        <begin position="147"/>
        <end position="160"/>
    </location>
</feature>
<feature type="transmembrane region" description="Helical" evidence="3">
    <location>
        <begin position="161"/>
        <end position="181"/>
    </location>
</feature>
<feature type="topological domain" description="Cytoplasmic" evidence="3">
    <location>
        <begin position="182"/>
        <end position="192"/>
    </location>
</feature>
<feature type="transmembrane region" description="Helical" evidence="3">
    <location>
        <begin position="193"/>
        <end position="213"/>
    </location>
</feature>
<feature type="topological domain" description="Extracellular" evidence="3">
    <location>
        <begin position="214"/>
        <end position="496"/>
    </location>
</feature>
<feature type="transmembrane region" description="Helical" evidence="3">
    <location>
        <begin position="497"/>
        <end position="517"/>
    </location>
</feature>
<feature type="topological domain" description="Cytoplasmic" evidence="3">
    <location>
        <begin position="518"/>
        <end position="605"/>
    </location>
</feature>
<feature type="domain" description="GP-PDE">
    <location>
        <begin position="228"/>
        <end position="485"/>
    </location>
</feature>
<feature type="region of interest" description="Disordered" evidence="4">
    <location>
        <begin position="582"/>
        <end position="605"/>
    </location>
</feature>
<feature type="glycosylation site" description="N-linked (GlcNAc...) asparagine" evidence="3">
    <location>
        <position position="301"/>
    </location>
</feature>
<feature type="glycosylation site" description="N-linked (GlcNAc...) asparagine" evidence="3">
    <location>
        <position position="336"/>
    </location>
</feature>
<feature type="glycosylation site" description="N-linked (GlcNAc...) asparagine" evidence="3">
    <location>
        <position position="352"/>
    </location>
</feature>
<feature type="glycosylation site" description="N-linked (GlcNAc...) asparagine" evidence="3">
    <location>
        <position position="374"/>
    </location>
</feature>
<feature type="glycosylation site" description="N-linked (GlcNAc...) asparagine" evidence="3">
    <location>
        <position position="448"/>
    </location>
</feature>
<feature type="disulfide bond" evidence="1">
    <location>
        <begin position="15"/>
        <end position="18"/>
    </location>
</feature>
<feature type="disulfide bond" evidence="1">
    <location>
        <begin position="25"/>
        <end position="571"/>
    </location>
</feature>
<feature type="splice variant" id="VSP_020813" description="In isoform 5." evidence="10">
    <location>
        <begin position="1"/>
        <end position="245"/>
    </location>
</feature>
<feature type="splice variant" id="VSP_020814" description="In isoform 4." evidence="11">
    <location>
        <begin position="1"/>
        <end position="218"/>
    </location>
</feature>
<feature type="splice variant" id="VSP_020815" description="In isoform 3." evidence="11">
    <location>
        <begin position="1"/>
        <end position="138"/>
    </location>
</feature>
<feature type="splice variant" id="VSP_020816" description="In isoform 2." evidence="9">
    <location>
        <begin position="40"/>
        <end position="158"/>
    </location>
</feature>
<feature type="sequence variant" id="VAR_027733" description="In dbSNP:rs571353." evidence="5 6 7 8">
    <original>A</original>
    <variation>T</variation>
    <location>
        <position position="480"/>
    </location>
</feature>
<feature type="sequence conflict" description="In Ref. 4; AAH33391." evidence="12" ref="4">
    <original>H</original>
    <variation>N</variation>
    <location>
        <position position="233"/>
    </location>
</feature>
<feature type="sequence conflict" description="In Ref. 6; AAP97686." evidence="12" ref="6">
    <original>QRP</original>
    <variation>GS</variation>
    <location>
        <begin position="397"/>
        <end position="399"/>
    </location>
</feature>
<evidence type="ECO:0000250" key="1">
    <source>
        <dbReference type="UniProtKB" id="Q3KTM2"/>
    </source>
</evidence>
<evidence type="ECO:0000250" key="2">
    <source>
        <dbReference type="UniProtKB" id="Q640M6"/>
    </source>
</evidence>
<evidence type="ECO:0000255" key="3"/>
<evidence type="ECO:0000256" key="4">
    <source>
        <dbReference type="SAM" id="MobiDB-lite"/>
    </source>
</evidence>
<evidence type="ECO:0000269" key="5">
    <source>
    </source>
</evidence>
<evidence type="ECO:0000269" key="6">
    <source>
    </source>
</evidence>
<evidence type="ECO:0000269" key="7">
    <source>
    </source>
</evidence>
<evidence type="ECO:0000269" key="8">
    <source>
    </source>
</evidence>
<evidence type="ECO:0000303" key="9">
    <source>
    </source>
</evidence>
<evidence type="ECO:0000303" key="10">
    <source>
    </source>
</evidence>
<evidence type="ECO:0000303" key="11">
    <source>
    </source>
</evidence>
<evidence type="ECO:0000305" key="12"/>
<evidence type="ECO:0000312" key="13">
    <source>
        <dbReference type="HGNC" id="HGNC:28804"/>
    </source>
</evidence>
<proteinExistence type="evidence at protein level"/>
<reference key="1">
    <citation type="journal article" date="2004" name="Proc. Natl. Acad. Sci. U.S.A.">
        <title>Large-scale cDNA transfection screening for genes related to cancer development and progression.</title>
        <authorList>
            <person name="Wan D."/>
            <person name="Gong Y."/>
            <person name="Qin W."/>
            <person name="Zhang P."/>
            <person name="Li J."/>
            <person name="Wei L."/>
            <person name="Zhou X."/>
            <person name="Li H."/>
            <person name="Qiu X."/>
            <person name="Zhong F."/>
            <person name="He L."/>
            <person name="Yu J."/>
            <person name="Yao G."/>
            <person name="Jiang H."/>
            <person name="Qian L."/>
            <person name="Yu Y."/>
            <person name="Shu H."/>
            <person name="Chen X."/>
            <person name="Xu H."/>
            <person name="Guo M."/>
            <person name="Pan Z."/>
            <person name="Chen Y."/>
            <person name="Ge C."/>
            <person name="Yang S."/>
            <person name="Gu J."/>
        </authorList>
    </citation>
    <scope>NUCLEOTIDE SEQUENCE [LARGE SCALE MRNA] (ISOFORM 1)</scope>
    <scope>VARIANT THR-480</scope>
</reference>
<reference key="2">
    <citation type="journal article" date="2003" name="Genome Res.">
        <title>The secreted protein discovery initiative (SPDI), a large-scale effort to identify novel human secreted and transmembrane proteins: a bioinformatics assessment.</title>
        <authorList>
            <person name="Clark H.F."/>
            <person name="Gurney A.L."/>
            <person name="Abaya E."/>
            <person name="Baker K."/>
            <person name="Baldwin D.T."/>
            <person name="Brush J."/>
            <person name="Chen J."/>
            <person name="Chow B."/>
            <person name="Chui C."/>
            <person name="Crowley C."/>
            <person name="Currell B."/>
            <person name="Deuel B."/>
            <person name="Dowd P."/>
            <person name="Eaton D."/>
            <person name="Foster J.S."/>
            <person name="Grimaldi C."/>
            <person name="Gu Q."/>
            <person name="Hass P.E."/>
            <person name="Heldens S."/>
            <person name="Huang A."/>
            <person name="Kim H.S."/>
            <person name="Klimowski L."/>
            <person name="Jin Y."/>
            <person name="Johnson S."/>
            <person name="Lee J."/>
            <person name="Lewis L."/>
            <person name="Liao D."/>
            <person name="Mark M.R."/>
            <person name="Robbie E."/>
            <person name="Sanchez C."/>
            <person name="Schoenfeld J."/>
            <person name="Seshagiri S."/>
            <person name="Simmons L."/>
            <person name="Singh J."/>
            <person name="Smith V."/>
            <person name="Stinson J."/>
            <person name="Vagts A."/>
            <person name="Vandlen R.L."/>
            <person name="Watanabe C."/>
            <person name="Wieand D."/>
            <person name="Woods K."/>
            <person name="Xie M.-H."/>
            <person name="Yansura D.G."/>
            <person name="Yi S."/>
            <person name="Yu G."/>
            <person name="Yuan J."/>
            <person name="Zhang M."/>
            <person name="Zhang Z."/>
            <person name="Goddard A.D."/>
            <person name="Wood W.I."/>
            <person name="Godowski P.J."/>
            <person name="Gray A.M."/>
        </authorList>
    </citation>
    <scope>NUCLEOTIDE SEQUENCE [LARGE SCALE MRNA] (ISOFORM 2)</scope>
    <scope>VARIANT THR-480</scope>
</reference>
<reference key="3">
    <citation type="journal article" date="2004" name="Nat. Genet.">
        <title>Complete sequencing and characterization of 21,243 full-length human cDNAs.</title>
        <authorList>
            <person name="Ota T."/>
            <person name="Suzuki Y."/>
            <person name="Nishikawa T."/>
            <person name="Otsuki T."/>
            <person name="Sugiyama T."/>
            <person name="Irie R."/>
            <person name="Wakamatsu A."/>
            <person name="Hayashi K."/>
            <person name="Sato H."/>
            <person name="Nagai K."/>
            <person name="Kimura K."/>
            <person name="Makita H."/>
            <person name="Sekine M."/>
            <person name="Obayashi M."/>
            <person name="Nishi T."/>
            <person name="Shibahara T."/>
            <person name="Tanaka T."/>
            <person name="Ishii S."/>
            <person name="Yamamoto J."/>
            <person name="Saito K."/>
            <person name="Kawai Y."/>
            <person name="Isono Y."/>
            <person name="Nakamura Y."/>
            <person name="Nagahari K."/>
            <person name="Murakami K."/>
            <person name="Yasuda T."/>
            <person name="Iwayanagi T."/>
            <person name="Wagatsuma M."/>
            <person name="Shiratori A."/>
            <person name="Sudo H."/>
            <person name="Hosoiri T."/>
            <person name="Kaku Y."/>
            <person name="Kodaira H."/>
            <person name="Kondo H."/>
            <person name="Sugawara M."/>
            <person name="Takahashi M."/>
            <person name="Kanda K."/>
            <person name="Yokoi T."/>
            <person name="Furuya T."/>
            <person name="Kikkawa E."/>
            <person name="Omura Y."/>
            <person name="Abe K."/>
            <person name="Kamihara K."/>
            <person name="Katsuta N."/>
            <person name="Sato K."/>
            <person name="Tanikawa M."/>
            <person name="Yamazaki M."/>
            <person name="Ninomiya K."/>
            <person name="Ishibashi T."/>
            <person name="Yamashita H."/>
            <person name="Murakawa K."/>
            <person name="Fujimori K."/>
            <person name="Tanai H."/>
            <person name="Kimata M."/>
            <person name="Watanabe M."/>
            <person name="Hiraoka S."/>
            <person name="Chiba Y."/>
            <person name="Ishida S."/>
            <person name="Ono Y."/>
            <person name="Takiguchi S."/>
            <person name="Watanabe S."/>
            <person name="Yosida M."/>
            <person name="Hotuta T."/>
            <person name="Kusano J."/>
            <person name="Kanehori K."/>
            <person name="Takahashi-Fujii A."/>
            <person name="Hara H."/>
            <person name="Tanase T.-O."/>
            <person name="Nomura Y."/>
            <person name="Togiya S."/>
            <person name="Komai F."/>
            <person name="Hara R."/>
            <person name="Takeuchi K."/>
            <person name="Arita M."/>
            <person name="Imose N."/>
            <person name="Musashino K."/>
            <person name="Yuuki H."/>
            <person name="Oshima A."/>
            <person name="Sasaki N."/>
            <person name="Aotsuka S."/>
            <person name="Yoshikawa Y."/>
            <person name="Matsunawa H."/>
            <person name="Ichihara T."/>
            <person name="Shiohata N."/>
            <person name="Sano S."/>
            <person name="Moriya S."/>
            <person name="Momiyama H."/>
            <person name="Satoh N."/>
            <person name="Takami S."/>
            <person name="Terashima Y."/>
            <person name="Suzuki O."/>
            <person name="Nakagawa S."/>
            <person name="Senoh A."/>
            <person name="Mizoguchi H."/>
            <person name="Goto Y."/>
            <person name="Shimizu F."/>
            <person name="Wakebe H."/>
            <person name="Hishigaki H."/>
            <person name="Watanabe T."/>
            <person name="Sugiyama A."/>
            <person name="Takemoto M."/>
            <person name="Kawakami B."/>
            <person name="Yamazaki M."/>
            <person name="Watanabe K."/>
            <person name="Kumagai A."/>
            <person name="Itakura S."/>
            <person name="Fukuzumi Y."/>
            <person name="Fujimori Y."/>
            <person name="Komiyama M."/>
            <person name="Tashiro H."/>
            <person name="Tanigami A."/>
            <person name="Fujiwara T."/>
            <person name="Ono T."/>
            <person name="Yamada K."/>
            <person name="Fujii Y."/>
            <person name="Ozaki K."/>
            <person name="Hirao M."/>
            <person name="Ohmori Y."/>
            <person name="Kawabata A."/>
            <person name="Hikiji T."/>
            <person name="Kobatake N."/>
            <person name="Inagaki H."/>
            <person name="Ikema Y."/>
            <person name="Okamoto S."/>
            <person name="Okitani R."/>
            <person name="Kawakami T."/>
            <person name="Noguchi S."/>
            <person name="Itoh T."/>
            <person name="Shigeta K."/>
            <person name="Senba T."/>
            <person name="Matsumura K."/>
            <person name="Nakajima Y."/>
            <person name="Mizuno T."/>
            <person name="Morinaga M."/>
            <person name="Sasaki M."/>
            <person name="Togashi T."/>
            <person name="Oyama M."/>
            <person name="Hata H."/>
            <person name="Watanabe M."/>
            <person name="Komatsu T."/>
            <person name="Mizushima-Sugano J."/>
            <person name="Satoh T."/>
            <person name="Shirai Y."/>
            <person name="Takahashi Y."/>
            <person name="Nakagawa K."/>
            <person name="Okumura K."/>
            <person name="Nagase T."/>
            <person name="Nomura N."/>
            <person name="Kikuchi H."/>
            <person name="Masuho Y."/>
            <person name="Yamashita R."/>
            <person name="Nakai K."/>
            <person name="Yada T."/>
            <person name="Nakamura Y."/>
            <person name="Ohara O."/>
            <person name="Isogai T."/>
            <person name="Sugano S."/>
        </authorList>
    </citation>
    <scope>NUCLEOTIDE SEQUENCE [LARGE SCALE MRNA] (ISOFORM 5)</scope>
    <scope>VARIANT THR-480</scope>
    <source>
        <tissue>Thyroid</tissue>
    </source>
</reference>
<reference key="4">
    <citation type="journal article" date="2004" name="Genome Res.">
        <title>The status, quality, and expansion of the NIH full-length cDNA project: the Mammalian Gene Collection (MGC).</title>
        <authorList>
            <consortium name="The MGC Project Team"/>
        </authorList>
    </citation>
    <scope>NUCLEOTIDE SEQUENCE [LARGE SCALE MRNA] (ISOFORMS 3 AND 4)</scope>
    <scope>VARIANT THR-480</scope>
    <source>
        <tissue>Eye</tissue>
        <tissue>Testis</tissue>
    </source>
</reference>
<reference key="5">
    <citation type="journal article" date="2005" name="DNA Res.">
        <title>Signal sequence and keyword trap in silico for selection of full-length human cDNAs encoding secretion or membrane proteins from oligo-capped cDNA libraries.</title>
        <authorList>
            <person name="Otsuki T."/>
            <person name="Ota T."/>
            <person name="Nishikawa T."/>
            <person name="Hayashi K."/>
            <person name="Suzuki Y."/>
            <person name="Yamamoto J."/>
            <person name="Wakamatsu A."/>
            <person name="Kimura K."/>
            <person name="Sakamoto K."/>
            <person name="Hatano N."/>
            <person name="Kawai Y."/>
            <person name="Ishii S."/>
            <person name="Saito K."/>
            <person name="Kojima S."/>
            <person name="Sugiyama T."/>
            <person name="Ono T."/>
            <person name="Okano K."/>
            <person name="Yoshikawa Y."/>
            <person name="Aotsuka S."/>
            <person name="Sasaki N."/>
            <person name="Hattori A."/>
            <person name="Okumura K."/>
            <person name="Nagai K."/>
            <person name="Sugano S."/>
            <person name="Isogai T."/>
        </authorList>
    </citation>
    <scope>NUCLEOTIDE SEQUENCE [LARGE SCALE MRNA] OF 142-605</scope>
    <source>
        <tissue>Teratocarcinoma</tissue>
    </source>
</reference>
<reference key="6">
    <citation type="submission" date="2001-11" db="EMBL/GenBank/DDBJ databases">
        <authorList>
            <person name="Guo J.H."/>
            <person name="Zan Q."/>
            <person name="Yu L."/>
        </authorList>
    </citation>
    <scope>NUCLEOTIDE SEQUENCE [LARGE SCALE MRNA] OF 166-605</scope>
    <source>
        <tissue>Brain</tissue>
    </source>
</reference>
<keyword id="KW-0025">Alternative splicing</keyword>
<keyword id="KW-0966">Cell projection</keyword>
<keyword id="KW-0963">Cytoplasm</keyword>
<keyword id="KW-1015">Disulfide bond</keyword>
<keyword id="KW-0325">Glycoprotein</keyword>
<keyword id="KW-0378">Hydrolase</keyword>
<keyword id="KW-0443">Lipid metabolism</keyword>
<keyword id="KW-0472">Membrane</keyword>
<keyword id="KW-0524">Neurogenesis</keyword>
<keyword id="KW-1267">Proteomics identification</keyword>
<keyword id="KW-1185">Reference proteome</keyword>
<keyword id="KW-0812">Transmembrane</keyword>
<keyword id="KW-1133">Transmembrane helix</keyword>
<protein>
    <recommendedName>
        <fullName evidence="12">Glycerophosphodiester phosphodiesterase domain-containing protein 5</fullName>
    </recommendedName>
    <alternativeName>
        <fullName evidence="2">Glycerophosphocholine phosphodiesterase GDPD5</fullName>
        <ecNumber evidence="2">3.1.4.2</ecNumber>
    </alternativeName>
    <alternativeName>
        <fullName>Glycerophosphodiester phosphodiesterase 2</fullName>
    </alternativeName>
    <alternativeName>
        <fullName evidence="12">Phosphoinositide phospholipase C GDPD5</fullName>
        <ecNumber evidence="1">3.1.4.11</ecNumber>
    </alternativeName>
</protein>
<accession>Q8WTR4</accession>
<accession>Q49AQ5</accession>
<accession>Q6UX76</accession>
<accession>Q7Z4S0</accession>
<accession>Q8N781</accession>
<accession>Q8NCB7</accession>
<accession>Q8TB77</accession>
<sequence length="605" mass="68586">MVRHQPLQYYEPQLCLSCLTGIYGCRWKRYQRSHDDTTPWERLWFLLLTFTFGLTLTWLYFWWEVHNDYDEFNWYLYNRMGYWSDWPVPILVTTAAAFAYIAGLLVLALCHIAVGQQMNLHWLHKIGLVVILASTVVAMSAVAQLWEDEWEVLLISLQGTAPFLHVGAVAAVTMLSWIVAGQFARAERTSSQVTILCTFFTVVFALYLAPLTISSPCIMEKKDLGPKPALIGHRGAPMLAPEHTLMSFRKALEQKLYGLQADITISLDGVPFLMHDTTLRRTTNVEEEFPELARRPASMLNWTTLQRLNAGQWFLKTDPFWTASSLSPSDHREAQNQSICSLAELLELAKGNATLLLNLRDPPREHPYRSSFINVTLEAVLHSGFPQHQVMWLPSRQRPLVRKVAPGFQQTSGSKEAVASLRRGHIQRLNLRYTQVSRQELRDYASWNLSVNLYTVNAPWLFSLLWCAGVPSVTSDNSHALSQVPSPLWIMPPDEYCLMWVTADLVSFTLIVGIFVLQKWRLGGIRSYNPEQIMLSAAVRRTSRDVSIMKEKLIFSEISDGVEVSDVLSVCSDNSYDTYANSTATPVGPRGGGSHTKTLIERSGR</sequence>
<gene>
    <name evidence="13" type="primary">GDPD5</name>
    <name evidence="1" type="synonym">GDE2</name>
    <name type="ORF">PP6037</name>
    <name type="ORF">PP9363</name>
    <name evidence="9" type="ORF">UNQ1850/PRO3580</name>
</gene>
<name>GDPD5_HUMAN</name>
<organism>
    <name type="scientific">Homo sapiens</name>
    <name type="common">Human</name>
    <dbReference type="NCBI Taxonomy" id="9606"/>
    <lineage>
        <taxon>Eukaryota</taxon>
        <taxon>Metazoa</taxon>
        <taxon>Chordata</taxon>
        <taxon>Craniata</taxon>
        <taxon>Vertebrata</taxon>
        <taxon>Euteleostomi</taxon>
        <taxon>Mammalia</taxon>
        <taxon>Eutheria</taxon>
        <taxon>Euarchontoglires</taxon>
        <taxon>Primates</taxon>
        <taxon>Haplorrhini</taxon>
        <taxon>Catarrhini</taxon>
        <taxon>Hominidae</taxon>
        <taxon>Homo</taxon>
    </lineage>
</organism>